<reference key="1">
    <citation type="journal article" date="2011" name="J. Bacteriol.">
        <title>Comparative genomics of 28 Salmonella enterica isolates: evidence for CRISPR-mediated adaptive sublineage evolution.</title>
        <authorList>
            <person name="Fricke W.F."/>
            <person name="Mammel M.K."/>
            <person name="McDermott P.F."/>
            <person name="Tartera C."/>
            <person name="White D.G."/>
            <person name="Leclerc J.E."/>
            <person name="Ravel J."/>
            <person name="Cebula T.A."/>
        </authorList>
    </citation>
    <scope>NUCLEOTIDE SEQUENCE [LARGE SCALE GENOMIC DNA]</scope>
    <source>
        <strain>SL483</strain>
    </source>
</reference>
<comment type="function">
    <text evidence="1">Plays an important role in the de novo pathway of purine nucleotide biosynthesis. Catalyzes the first committed step in the biosynthesis of AMP from IMP.</text>
</comment>
<comment type="catalytic activity">
    <reaction evidence="1">
        <text>IMP + L-aspartate + GTP = N(6)-(1,2-dicarboxyethyl)-AMP + GDP + phosphate + 2 H(+)</text>
        <dbReference type="Rhea" id="RHEA:15753"/>
        <dbReference type="ChEBI" id="CHEBI:15378"/>
        <dbReference type="ChEBI" id="CHEBI:29991"/>
        <dbReference type="ChEBI" id="CHEBI:37565"/>
        <dbReference type="ChEBI" id="CHEBI:43474"/>
        <dbReference type="ChEBI" id="CHEBI:57567"/>
        <dbReference type="ChEBI" id="CHEBI:58053"/>
        <dbReference type="ChEBI" id="CHEBI:58189"/>
        <dbReference type="EC" id="6.3.4.4"/>
    </reaction>
</comment>
<comment type="cofactor">
    <cofactor evidence="1">
        <name>Mg(2+)</name>
        <dbReference type="ChEBI" id="CHEBI:18420"/>
    </cofactor>
    <text evidence="1">Binds 1 Mg(2+) ion per subunit.</text>
</comment>
<comment type="pathway">
    <text evidence="1">Purine metabolism; AMP biosynthesis via de novo pathway; AMP from IMP: step 1/2.</text>
</comment>
<comment type="subunit">
    <text evidence="1">Homodimer.</text>
</comment>
<comment type="subcellular location">
    <subcellularLocation>
        <location evidence="1">Cytoplasm</location>
    </subcellularLocation>
</comment>
<comment type="similarity">
    <text evidence="1">Belongs to the adenylosuccinate synthetase family.</text>
</comment>
<protein>
    <recommendedName>
        <fullName evidence="1">Adenylosuccinate synthetase</fullName>
        <shortName evidence="1">AMPSase</shortName>
        <shortName evidence="1">AdSS</shortName>
        <ecNumber evidence="1">6.3.4.4</ecNumber>
    </recommendedName>
    <alternativeName>
        <fullName evidence="1">IMP--aspartate ligase</fullName>
    </alternativeName>
</protein>
<organism>
    <name type="scientific">Salmonella agona (strain SL483)</name>
    <dbReference type="NCBI Taxonomy" id="454166"/>
    <lineage>
        <taxon>Bacteria</taxon>
        <taxon>Pseudomonadati</taxon>
        <taxon>Pseudomonadota</taxon>
        <taxon>Gammaproteobacteria</taxon>
        <taxon>Enterobacterales</taxon>
        <taxon>Enterobacteriaceae</taxon>
        <taxon>Salmonella</taxon>
    </lineage>
</organism>
<proteinExistence type="inferred from homology"/>
<sequence>MGNNVVVLGTQWGDEGKGKIVDLLTERAKYVVRYQGGHNAGHTLVINGEKTVLHLIPSGILRENVTSIIGNGVVLSPAALMKEMKELEDRGIPVRERLLLSEACPLILDYHVALDNAREKARGAKAIGTTGRGIGPAYEDKVARRGLRVGDLFDKETFAEKLKEVMEYHNFQLVNYYKVEAVDYQKVLDDTMAVADILTSMVVDVSDLLDQARQRGDFVMFEGAQGTLLDIDHGTYPYVTSSNTTAGGVATGSGLGPRYVDYVLGILKAYSTRVGAGPFPTELFDETGEFLCKQGNEYGATTGRRRRTGWLDTVAVRRAVQLNSLSGFCLTKLDVLDGLKEVKLCVAYRMPDGREVTTTPLAADDWKGVEPIYETMPGWSESTFGVKDRSGLPQAALNYIKRIEELTGVPIDIISTGPDRTETMILRDPFDA</sequence>
<evidence type="ECO:0000255" key="1">
    <source>
        <dbReference type="HAMAP-Rule" id="MF_00011"/>
    </source>
</evidence>
<gene>
    <name evidence="1" type="primary">purA</name>
    <name type="ordered locus">SeAg_B4644</name>
</gene>
<name>PURA_SALA4</name>
<dbReference type="EC" id="6.3.4.4" evidence="1"/>
<dbReference type="EMBL" id="CP001138">
    <property type="protein sequence ID" value="ACH49266.1"/>
    <property type="molecule type" value="Genomic_DNA"/>
</dbReference>
<dbReference type="RefSeq" id="WP_000527965.1">
    <property type="nucleotide sequence ID" value="NC_011149.1"/>
</dbReference>
<dbReference type="SMR" id="B5F392"/>
<dbReference type="KEGG" id="sea:SeAg_B4644"/>
<dbReference type="HOGENOM" id="CLU_029848_0_0_6"/>
<dbReference type="UniPathway" id="UPA00075">
    <property type="reaction ID" value="UER00335"/>
</dbReference>
<dbReference type="Proteomes" id="UP000008819">
    <property type="component" value="Chromosome"/>
</dbReference>
<dbReference type="GO" id="GO:0005737">
    <property type="term" value="C:cytoplasm"/>
    <property type="evidence" value="ECO:0007669"/>
    <property type="project" value="UniProtKB-SubCell"/>
</dbReference>
<dbReference type="GO" id="GO:0004019">
    <property type="term" value="F:adenylosuccinate synthase activity"/>
    <property type="evidence" value="ECO:0007669"/>
    <property type="project" value="UniProtKB-UniRule"/>
</dbReference>
<dbReference type="GO" id="GO:0005525">
    <property type="term" value="F:GTP binding"/>
    <property type="evidence" value="ECO:0007669"/>
    <property type="project" value="UniProtKB-UniRule"/>
</dbReference>
<dbReference type="GO" id="GO:0000287">
    <property type="term" value="F:magnesium ion binding"/>
    <property type="evidence" value="ECO:0007669"/>
    <property type="project" value="UniProtKB-UniRule"/>
</dbReference>
<dbReference type="GO" id="GO:0044208">
    <property type="term" value="P:'de novo' AMP biosynthetic process"/>
    <property type="evidence" value="ECO:0007669"/>
    <property type="project" value="UniProtKB-UniRule"/>
</dbReference>
<dbReference type="GO" id="GO:0046040">
    <property type="term" value="P:IMP metabolic process"/>
    <property type="evidence" value="ECO:0007669"/>
    <property type="project" value="TreeGrafter"/>
</dbReference>
<dbReference type="CDD" id="cd03108">
    <property type="entry name" value="AdSS"/>
    <property type="match status" value="1"/>
</dbReference>
<dbReference type="FunFam" id="1.10.300.10:FF:000001">
    <property type="entry name" value="Adenylosuccinate synthetase"/>
    <property type="match status" value="1"/>
</dbReference>
<dbReference type="FunFam" id="3.90.170.10:FF:000001">
    <property type="entry name" value="Adenylosuccinate synthetase"/>
    <property type="match status" value="1"/>
</dbReference>
<dbReference type="Gene3D" id="3.40.440.10">
    <property type="entry name" value="Adenylosuccinate Synthetase, subunit A, domain 1"/>
    <property type="match status" value="1"/>
</dbReference>
<dbReference type="Gene3D" id="1.10.300.10">
    <property type="entry name" value="Adenylosuccinate Synthetase, subunit A, domain 2"/>
    <property type="match status" value="1"/>
</dbReference>
<dbReference type="Gene3D" id="3.90.170.10">
    <property type="entry name" value="Adenylosuccinate Synthetase, subunit A, domain 3"/>
    <property type="match status" value="1"/>
</dbReference>
<dbReference type="HAMAP" id="MF_00011">
    <property type="entry name" value="Adenylosucc_synth"/>
    <property type="match status" value="1"/>
</dbReference>
<dbReference type="InterPro" id="IPR018220">
    <property type="entry name" value="Adenylosuccin_syn_GTP-bd"/>
</dbReference>
<dbReference type="InterPro" id="IPR033128">
    <property type="entry name" value="Adenylosuccin_syn_Lys_AS"/>
</dbReference>
<dbReference type="InterPro" id="IPR042109">
    <property type="entry name" value="Adenylosuccinate_synth_dom1"/>
</dbReference>
<dbReference type="InterPro" id="IPR042110">
    <property type="entry name" value="Adenylosuccinate_synth_dom2"/>
</dbReference>
<dbReference type="InterPro" id="IPR042111">
    <property type="entry name" value="Adenylosuccinate_synth_dom3"/>
</dbReference>
<dbReference type="InterPro" id="IPR001114">
    <property type="entry name" value="Adenylosuccinate_synthetase"/>
</dbReference>
<dbReference type="InterPro" id="IPR027417">
    <property type="entry name" value="P-loop_NTPase"/>
</dbReference>
<dbReference type="NCBIfam" id="NF002223">
    <property type="entry name" value="PRK01117.1"/>
    <property type="match status" value="1"/>
</dbReference>
<dbReference type="NCBIfam" id="TIGR00184">
    <property type="entry name" value="purA"/>
    <property type="match status" value="1"/>
</dbReference>
<dbReference type="PANTHER" id="PTHR11846">
    <property type="entry name" value="ADENYLOSUCCINATE SYNTHETASE"/>
    <property type="match status" value="1"/>
</dbReference>
<dbReference type="PANTHER" id="PTHR11846:SF0">
    <property type="entry name" value="ADENYLOSUCCINATE SYNTHETASE"/>
    <property type="match status" value="1"/>
</dbReference>
<dbReference type="Pfam" id="PF00709">
    <property type="entry name" value="Adenylsucc_synt"/>
    <property type="match status" value="1"/>
</dbReference>
<dbReference type="SMART" id="SM00788">
    <property type="entry name" value="Adenylsucc_synt"/>
    <property type="match status" value="1"/>
</dbReference>
<dbReference type="SUPFAM" id="SSF52540">
    <property type="entry name" value="P-loop containing nucleoside triphosphate hydrolases"/>
    <property type="match status" value="1"/>
</dbReference>
<dbReference type="PROSITE" id="PS01266">
    <property type="entry name" value="ADENYLOSUCCIN_SYN_1"/>
    <property type="match status" value="1"/>
</dbReference>
<dbReference type="PROSITE" id="PS00513">
    <property type="entry name" value="ADENYLOSUCCIN_SYN_2"/>
    <property type="match status" value="1"/>
</dbReference>
<feature type="chain" id="PRO_1000089332" description="Adenylosuccinate synthetase">
    <location>
        <begin position="1"/>
        <end position="432"/>
    </location>
</feature>
<feature type="active site" description="Proton acceptor" evidence="1">
    <location>
        <position position="14"/>
    </location>
</feature>
<feature type="active site" description="Proton donor" evidence="1">
    <location>
        <position position="42"/>
    </location>
</feature>
<feature type="binding site" evidence="1">
    <location>
        <begin position="13"/>
        <end position="19"/>
    </location>
    <ligand>
        <name>GTP</name>
        <dbReference type="ChEBI" id="CHEBI:37565"/>
    </ligand>
</feature>
<feature type="binding site" description="in other chain" evidence="1">
    <location>
        <begin position="14"/>
        <end position="17"/>
    </location>
    <ligand>
        <name>IMP</name>
        <dbReference type="ChEBI" id="CHEBI:58053"/>
        <note>ligand shared between dimeric partners</note>
    </ligand>
</feature>
<feature type="binding site" evidence="1">
    <location>
        <position position="14"/>
    </location>
    <ligand>
        <name>Mg(2+)</name>
        <dbReference type="ChEBI" id="CHEBI:18420"/>
    </ligand>
</feature>
<feature type="binding site" description="in other chain" evidence="1">
    <location>
        <begin position="39"/>
        <end position="42"/>
    </location>
    <ligand>
        <name>IMP</name>
        <dbReference type="ChEBI" id="CHEBI:58053"/>
        <note>ligand shared between dimeric partners</note>
    </ligand>
</feature>
<feature type="binding site" evidence="1">
    <location>
        <begin position="41"/>
        <end position="43"/>
    </location>
    <ligand>
        <name>GTP</name>
        <dbReference type="ChEBI" id="CHEBI:37565"/>
    </ligand>
</feature>
<feature type="binding site" evidence="1">
    <location>
        <position position="41"/>
    </location>
    <ligand>
        <name>Mg(2+)</name>
        <dbReference type="ChEBI" id="CHEBI:18420"/>
    </ligand>
</feature>
<feature type="binding site" description="in other chain" evidence="1">
    <location>
        <position position="130"/>
    </location>
    <ligand>
        <name>IMP</name>
        <dbReference type="ChEBI" id="CHEBI:58053"/>
        <note>ligand shared between dimeric partners</note>
    </ligand>
</feature>
<feature type="binding site" evidence="1">
    <location>
        <position position="144"/>
    </location>
    <ligand>
        <name>IMP</name>
        <dbReference type="ChEBI" id="CHEBI:58053"/>
        <note>ligand shared between dimeric partners</note>
    </ligand>
</feature>
<feature type="binding site" description="in other chain" evidence="1">
    <location>
        <position position="225"/>
    </location>
    <ligand>
        <name>IMP</name>
        <dbReference type="ChEBI" id="CHEBI:58053"/>
        <note>ligand shared between dimeric partners</note>
    </ligand>
</feature>
<feature type="binding site" description="in other chain" evidence="1">
    <location>
        <position position="240"/>
    </location>
    <ligand>
        <name>IMP</name>
        <dbReference type="ChEBI" id="CHEBI:58053"/>
        <note>ligand shared between dimeric partners</note>
    </ligand>
</feature>
<feature type="binding site" evidence="1">
    <location>
        <begin position="300"/>
        <end position="306"/>
    </location>
    <ligand>
        <name>substrate</name>
    </ligand>
</feature>
<feature type="binding site" description="in other chain" evidence="1">
    <location>
        <position position="304"/>
    </location>
    <ligand>
        <name>IMP</name>
        <dbReference type="ChEBI" id="CHEBI:58053"/>
        <note>ligand shared between dimeric partners</note>
    </ligand>
</feature>
<feature type="binding site" evidence="1">
    <location>
        <position position="306"/>
    </location>
    <ligand>
        <name>GTP</name>
        <dbReference type="ChEBI" id="CHEBI:37565"/>
    </ligand>
</feature>
<feature type="binding site" evidence="1">
    <location>
        <begin position="332"/>
        <end position="334"/>
    </location>
    <ligand>
        <name>GTP</name>
        <dbReference type="ChEBI" id="CHEBI:37565"/>
    </ligand>
</feature>
<feature type="binding site" evidence="1">
    <location>
        <begin position="415"/>
        <end position="417"/>
    </location>
    <ligand>
        <name>GTP</name>
        <dbReference type="ChEBI" id="CHEBI:37565"/>
    </ligand>
</feature>
<accession>B5F392</accession>
<keyword id="KW-0963">Cytoplasm</keyword>
<keyword id="KW-0342">GTP-binding</keyword>
<keyword id="KW-0436">Ligase</keyword>
<keyword id="KW-0460">Magnesium</keyword>
<keyword id="KW-0479">Metal-binding</keyword>
<keyword id="KW-0547">Nucleotide-binding</keyword>
<keyword id="KW-0658">Purine biosynthesis</keyword>